<protein>
    <recommendedName>
        <fullName>External alternative NAD(P)H-ubiquinone oxidoreductase B1, mitochondrial</fullName>
        <ecNumber evidence="4 5">1.6.5.9</ecNumber>
    </recommendedName>
    <alternativeName>
        <fullName>External alternative NADH dehydrogenase NDB1</fullName>
    </alternativeName>
    <alternativeName>
        <fullName>NADH:ubiquinone reductase (non-electrogenic) NDB1</fullName>
    </alternativeName>
</protein>
<comment type="function">
    <text evidence="1 4 5">Calcium-dependent NAD(P)H dehydrogenase. Binds calcium ions (By similarity). Alternative NADH-ubiquinone oxidoreductase which catalyzes the oxidation of mitochondrial NADH does not translocate protons across the inner mitochondrial membrane.</text>
</comment>
<comment type="catalytic activity">
    <reaction evidence="4 5">
        <text>a quinone + NADH + H(+) = a quinol + NAD(+)</text>
        <dbReference type="Rhea" id="RHEA:46160"/>
        <dbReference type="ChEBI" id="CHEBI:15378"/>
        <dbReference type="ChEBI" id="CHEBI:24646"/>
        <dbReference type="ChEBI" id="CHEBI:57540"/>
        <dbReference type="ChEBI" id="CHEBI:57945"/>
        <dbReference type="ChEBI" id="CHEBI:132124"/>
        <dbReference type="EC" id="1.6.5.9"/>
    </reaction>
</comment>
<comment type="catalytic activity">
    <reaction evidence="4 5">
        <text>a ubiquinone + NADH + H(+) = a ubiquinol + NAD(+)</text>
        <dbReference type="Rhea" id="RHEA:23152"/>
        <dbReference type="Rhea" id="RHEA-COMP:9565"/>
        <dbReference type="Rhea" id="RHEA-COMP:9566"/>
        <dbReference type="ChEBI" id="CHEBI:15378"/>
        <dbReference type="ChEBI" id="CHEBI:16389"/>
        <dbReference type="ChEBI" id="CHEBI:17976"/>
        <dbReference type="ChEBI" id="CHEBI:57540"/>
        <dbReference type="ChEBI" id="CHEBI:57945"/>
    </reaction>
</comment>
<comment type="cofactor">
    <cofactor evidence="1">
        <name>FAD</name>
        <dbReference type="ChEBI" id="CHEBI:57692"/>
    </cofactor>
    <text evidence="1">Binds 1 FAD per subunit.</text>
</comment>
<comment type="activity regulation">
    <text evidence="1">Activity is calcium-dependent with a more pronounced effect at higher pH.</text>
</comment>
<comment type="subcellular location">
    <subcellularLocation>
        <location evidence="4">Mitochondrion inner membrane</location>
        <topology evidence="4">Peripheral membrane protein</topology>
        <orientation evidence="4">Intermembrane side</orientation>
    </subcellularLocation>
    <subcellularLocation>
        <location evidence="1">Peroxisome</location>
    </subcellularLocation>
</comment>
<comment type="similarity">
    <text evidence="6">Belongs to the NADH dehydrogenase family.</text>
</comment>
<name>NDB1_SOLTU</name>
<dbReference type="EC" id="1.6.5.9" evidence="4 5"/>
<dbReference type="EMBL" id="AJ245862">
    <property type="protein sequence ID" value="CAB52797.1"/>
    <property type="molecule type" value="mRNA"/>
</dbReference>
<dbReference type="RefSeq" id="NP_001274854.1">
    <property type="nucleotide sequence ID" value="NM_001287925.1"/>
</dbReference>
<dbReference type="SMR" id="Q9ST62"/>
<dbReference type="FunCoup" id="Q9ST62">
    <property type="interactions" value="752"/>
</dbReference>
<dbReference type="STRING" id="4113.Q9ST62"/>
<dbReference type="GeneID" id="102591773"/>
<dbReference type="KEGG" id="sot:102591773"/>
<dbReference type="InParanoid" id="Q9ST62"/>
<dbReference type="OrthoDB" id="3244603at2759"/>
<dbReference type="Proteomes" id="UP000011115">
    <property type="component" value="Unassembled WGS sequence"/>
</dbReference>
<dbReference type="ExpressionAtlas" id="Q9ST62">
    <property type="expression patterns" value="baseline"/>
</dbReference>
<dbReference type="GO" id="GO:0005743">
    <property type="term" value="C:mitochondrial inner membrane"/>
    <property type="evidence" value="ECO:0007669"/>
    <property type="project" value="UniProtKB-SubCell"/>
</dbReference>
<dbReference type="GO" id="GO:0005758">
    <property type="term" value="C:mitochondrial intermembrane space"/>
    <property type="evidence" value="ECO:0000314"/>
    <property type="project" value="UniProtKB"/>
</dbReference>
<dbReference type="GO" id="GO:0005739">
    <property type="term" value="C:mitochondrion"/>
    <property type="evidence" value="ECO:0000318"/>
    <property type="project" value="GO_Central"/>
</dbReference>
<dbReference type="GO" id="GO:0005777">
    <property type="term" value="C:peroxisome"/>
    <property type="evidence" value="ECO:0007669"/>
    <property type="project" value="UniProtKB-SubCell"/>
</dbReference>
<dbReference type="GO" id="GO:0005509">
    <property type="term" value="F:calcium ion binding"/>
    <property type="evidence" value="ECO:0007669"/>
    <property type="project" value="InterPro"/>
</dbReference>
<dbReference type="GO" id="GO:0050136">
    <property type="term" value="F:NADH:ubiquinone reductase (non-electrogenic) activity"/>
    <property type="evidence" value="ECO:0007669"/>
    <property type="project" value="UniProtKB-EC"/>
</dbReference>
<dbReference type="GO" id="GO:0016491">
    <property type="term" value="F:oxidoreductase activity"/>
    <property type="evidence" value="ECO:0000314"/>
    <property type="project" value="UniProtKB"/>
</dbReference>
<dbReference type="FunFam" id="3.50.50.100:FF:000002">
    <property type="entry name" value="External alternative NAD(P)H-ubiquinone oxidoreductase B1, mitochondrial"/>
    <property type="match status" value="1"/>
</dbReference>
<dbReference type="FunFam" id="3.50.50.100:FF:000008">
    <property type="entry name" value="External alternative NAD(P)H-ubiquinone oxidoreductase B1, mitochondrial"/>
    <property type="match status" value="1"/>
</dbReference>
<dbReference type="Gene3D" id="3.50.50.100">
    <property type="match status" value="2"/>
</dbReference>
<dbReference type="InterPro" id="IPR011992">
    <property type="entry name" value="EF-hand-dom_pair"/>
</dbReference>
<dbReference type="InterPro" id="IPR018247">
    <property type="entry name" value="EF_Hand_1_Ca_BS"/>
</dbReference>
<dbReference type="InterPro" id="IPR002048">
    <property type="entry name" value="EF_hand_dom"/>
</dbReference>
<dbReference type="InterPro" id="IPR036188">
    <property type="entry name" value="FAD/NAD-bd_sf"/>
</dbReference>
<dbReference type="InterPro" id="IPR023753">
    <property type="entry name" value="FAD/NAD-binding_dom"/>
</dbReference>
<dbReference type="InterPro" id="IPR045024">
    <property type="entry name" value="NDH-2"/>
</dbReference>
<dbReference type="InterPro" id="IPR054585">
    <property type="entry name" value="NDH2-like_C"/>
</dbReference>
<dbReference type="PANTHER" id="PTHR43706:SF3">
    <property type="entry name" value="EXTERNAL ALTERNATIVE NAD(P)H-UBIQUINONE OXIDOREDUCTASE B1, MITOCHONDRIAL"/>
    <property type="match status" value="1"/>
</dbReference>
<dbReference type="PANTHER" id="PTHR43706">
    <property type="entry name" value="NADH DEHYDROGENASE"/>
    <property type="match status" value="1"/>
</dbReference>
<dbReference type="Pfam" id="PF22366">
    <property type="entry name" value="NDH2_C"/>
    <property type="match status" value="1"/>
</dbReference>
<dbReference type="Pfam" id="PF07992">
    <property type="entry name" value="Pyr_redox_2"/>
    <property type="match status" value="1"/>
</dbReference>
<dbReference type="PRINTS" id="PR00368">
    <property type="entry name" value="FADPNR"/>
</dbReference>
<dbReference type="SUPFAM" id="SSF47473">
    <property type="entry name" value="EF-hand"/>
    <property type="match status" value="1"/>
</dbReference>
<dbReference type="SUPFAM" id="SSF51905">
    <property type="entry name" value="FAD/NAD(P)-binding domain"/>
    <property type="match status" value="2"/>
</dbReference>
<dbReference type="PROSITE" id="PS00018">
    <property type="entry name" value="EF_HAND_1"/>
    <property type="match status" value="1"/>
</dbReference>
<dbReference type="PROSITE" id="PS50222">
    <property type="entry name" value="EF_HAND_2"/>
    <property type="match status" value="1"/>
</dbReference>
<feature type="transit peptide" description="Mitochondrion" evidence="2">
    <location>
        <begin position="1"/>
        <end position="35"/>
    </location>
</feature>
<feature type="chain" id="PRO_0000422944" description="External alternative NAD(P)H-ubiquinone oxidoreductase B1, mitochondrial">
    <location>
        <begin position="36"/>
        <end position="577"/>
    </location>
</feature>
<feature type="domain" description="EF-hand" evidence="3">
    <location>
        <begin position="378"/>
        <end position="413"/>
    </location>
</feature>
<feature type="short sequence motif" description="Microbody targeting signal" evidence="1">
    <location>
        <begin position="568"/>
        <end position="577"/>
    </location>
</feature>
<feature type="binding site" evidence="1">
    <location>
        <begin position="57"/>
        <end position="87"/>
    </location>
    <ligand>
        <name>FAD</name>
        <dbReference type="ChEBI" id="CHEBI:57692"/>
    </ligand>
</feature>
<feature type="binding site" evidence="1">
    <location>
        <begin position="221"/>
        <end position="257"/>
    </location>
    <ligand>
        <name>NAD(+)</name>
        <dbReference type="ChEBI" id="CHEBI:57540"/>
    </ligand>
</feature>
<feature type="binding site" evidence="3">
    <location>
        <position position="391"/>
    </location>
    <ligand>
        <name>Ca(2+)</name>
        <dbReference type="ChEBI" id="CHEBI:29108"/>
    </ligand>
</feature>
<feature type="binding site" evidence="3">
    <location>
        <position position="393"/>
    </location>
    <ligand>
        <name>Ca(2+)</name>
        <dbReference type="ChEBI" id="CHEBI:29108"/>
    </ligand>
</feature>
<feature type="binding site" evidence="3">
    <location>
        <position position="395"/>
    </location>
    <ligand>
        <name>Ca(2+)</name>
        <dbReference type="ChEBI" id="CHEBI:29108"/>
    </ligand>
</feature>
<feature type="binding site" evidence="3">
    <location>
        <position position="397"/>
    </location>
    <ligand>
        <name>Ca(2+)</name>
        <dbReference type="ChEBI" id="CHEBI:29108"/>
    </ligand>
</feature>
<feature type="binding site" evidence="3">
    <location>
        <position position="402"/>
    </location>
    <ligand>
        <name>Ca(2+)</name>
        <dbReference type="ChEBI" id="CHEBI:29108"/>
    </ligand>
</feature>
<organism>
    <name type="scientific">Solanum tuberosum</name>
    <name type="common">Potato</name>
    <dbReference type="NCBI Taxonomy" id="4113"/>
    <lineage>
        <taxon>Eukaryota</taxon>
        <taxon>Viridiplantae</taxon>
        <taxon>Streptophyta</taxon>
        <taxon>Embryophyta</taxon>
        <taxon>Tracheophyta</taxon>
        <taxon>Spermatophyta</taxon>
        <taxon>Magnoliopsida</taxon>
        <taxon>eudicotyledons</taxon>
        <taxon>Gunneridae</taxon>
        <taxon>Pentapetalae</taxon>
        <taxon>asterids</taxon>
        <taxon>lamiids</taxon>
        <taxon>Solanales</taxon>
        <taxon>Solanaceae</taxon>
        <taxon>Solanoideae</taxon>
        <taxon>Solaneae</taxon>
        <taxon>Solanum</taxon>
    </lineage>
</organism>
<evidence type="ECO:0000250" key="1"/>
<evidence type="ECO:0000255" key="2"/>
<evidence type="ECO:0000255" key="3">
    <source>
        <dbReference type="PROSITE-ProRule" id="PRU00448"/>
    </source>
</evidence>
<evidence type="ECO:0000269" key="4">
    <source>
    </source>
</evidence>
<evidence type="ECO:0000269" key="5">
    <source>
    </source>
</evidence>
<evidence type="ECO:0000305" key="6"/>
<gene>
    <name type="primary">NDB1</name>
</gene>
<sequence length="577" mass="65155">MRGFTYLSKVLHSHSSYSKLLVLCSVSTGGLLVYAESNVESGKQVVEQNQPESKKKRVVVLGTGWGGTSFLKDVDISSYDVQVVSPRNYFAFTPLLPSVTCGTVEARSIVEPVRNIIKKRSGEIQFWEAECLKIDPVNRTVSCRSGINDNLAGHNDFSLQYDYLVVAVGAQVNTFNTPGVMEHCHFLKEVEDAQRIRRTVIDCFEKSVIPGLSEEERRTNLHFVIVGGGPTGVEFAAELHDYVYEDLVKIYPSVKDFVKITVIQSGDHILNTFDERISSFAEQKFQRDGIEVSTGCRVTSVSDHFINMKVKSTGKHVEVPYGMVVWSTGVGTRPFVKDFMEQVGQEKRRILATDEWLRVKGCSNVYALGDCASVDQHKVMEDISTIFEAADKDDSGTLSVEEFRDVLEDIIIRYPQVDLYLKNKHLLEAKDLFRDSEGNEREEVDIEGFKLALSHVDSQMKSLPATAQVAAQQGTYLARCLNRWDQCKSNPEGPRRFKSSGRHEFLPFEYRHLGQFAPLGGDQAAAELPGDWVSMGHSTQWLWYSVYASKQVSWRTRYLVVGDWVRRYIFGRDSSRI</sequence>
<accession>Q9ST62</accession>
<proteinExistence type="evidence at protein level"/>
<reference key="1">
    <citation type="journal article" date="1999" name="Plant J.">
        <title>Homologues of yeast and bacterial rotenone-insensitive NADH dehydrogenases in higher eukaryotes: two enzymes are present in potato mitochondria.</title>
        <authorList>
            <person name="Rasmusson A.G."/>
            <person name="Svensson A.S."/>
            <person name="Knoop V."/>
            <person name="Grohmann L."/>
            <person name="Brennicke A."/>
        </authorList>
    </citation>
    <scope>NUCLEOTIDE SEQUENCE [MRNA]</scope>
    <scope>CATALYTIC ACTIVITY</scope>
    <scope>SUBCELLULAR LOCATION</scope>
    <scope>FUNCTION</scope>
    <source>
        <strain>cv. Desiree</strain>
        <tissue>Leaf</tissue>
    </source>
</reference>
<reference key="2">
    <citation type="journal article" date="2004" name="Plant J.">
        <title>Identification of a mitochondrial external NADPH dehydrogenase by overexpression in transgenic Nicotiana sylvestris.</title>
        <authorList>
            <person name="Michalecka A.M."/>
            <person name="Agius S.C."/>
            <person name="Moller I.M."/>
            <person name="Rasmusson A.G."/>
        </authorList>
    </citation>
    <scope>FUNCTION</scope>
    <scope>CATALYTIC ACTIVITY</scope>
    <source>
        <strain>cv. Desiree</strain>
        <tissue>Leaf</tissue>
    </source>
</reference>
<keyword id="KW-0106">Calcium</keyword>
<keyword id="KW-0274">FAD</keyword>
<keyword id="KW-0285">Flavoprotein</keyword>
<keyword id="KW-0472">Membrane</keyword>
<keyword id="KW-0479">Metal-binding</keyword>
<keyword id="KW-0496">Mitochondrion</keyword>
<keyword id="KW-0999">Mitochondrion inner membrane</keyword>
<keyword id="KW-0520">NAD</keyword>
<keyword id="KW-0521">NADP</keyword>
<keyword id="KW-0560">Oxidoreductase</keyword>
<keyword id="KW-0576">Peroxisome</keyword>
<keyword id="KW-1185">Reference proteome</keyword>
<keyword id="KW-0809">Transit peptide</keyword>